<proteinExistence type="inferred from homology"/>
<name>RDGC_NEIMA</name>
<keyword id="KW-0963">Cytoplasm</keyword>
<keyword id="KW-0233">DNA recombination</keyword>
<protein>
    <recommendedName>
        <fullName evidence="1">Recombination-associated protein RdgC</fullName>
    </recommendedName>
</protein>
<accession>Q9JV02</accession>
<accession>A1IR90</accession>
<organism>
    <name type="scientific">Neisseria meningitidis serogroup A / serotype 4A (strain DSM 15465 / Z2491)</name>
    <dbReference type="NCBI Taxonomy" id="122587"/>
    <lineage>
        <taxon>Bacteria</taxon>
        <taxon>Pseudomonadati</taxon>
        <taxon>Pseudomonadota</taxon>
        <taxon>Betaproteobacteria</taxon>
        <taxon>Neisseriales</taxon>
        <taxon>Neisseriaceae</taxon>
        <taxon>Neisseria</taxon>
    </lineage>
</organism>
<comment type="function">
    <text evidence="1">May be involved in recombination.</text>
</comment>
<comment type="subcellular location">
    <subcellularLocation>
        <location evidence="1">Cytoplasm</location>
        <location evidence="1">Nucleoid</location>
    </subcellularLocation>
</comment>
<comment type="similarity">
    <text evidence="1">Belongs to the RdgC family.</text>
</comment>
<reference key="1">
    <citation type="journal article" date="2000" name="Nature">
        <title>Complete DNA sequence of a serogroup A strain of Neisseria meningitidis Z2491.</title>
        <authorList>
            <person name="Parkhill J."/>
            <person name="Achtman M."/>
            <person name="James K.D."/>
            <person name="Bentley S.D."/>
            <person name="Churcher C.M."/>
            <person name="Klee S.R."/>
            <person name="Morelli G."/>
            <person name="Basham D."/>
            <person name="Brown D."/>
            <person name="Chillingworth T."/>
            <person name="Davies R.M."/>
            <person name="Davis P."/>
            <person name="Devlin K."/>
            <person name="Feltwell T."/>
            <person name="Hamlin N."/>
            <person name="Holroyd S."/>
            <person name="Jagels K."/>
            <person name="Leather S."/>
            <person name="Moule S."/>
            <person name="Mungall K.L."/>
            <person name="Quail M.A."/>
            <person name="Rajandream M.A."/>
            <person name="Rutherford K.M."/>
            <person name="Simmonds M."/>
            <person name="Skelton J."/>
            <person name="Whitehead S."/>
            <person name="Spratt B.G."/>
            <person name="Barrell B.G."/>
        </authorList>
    </citation>
    <scope>NUCLEOTIDE SEQUENCE [LARGE SCALE GENOMIC DNA]</scope>
    <source>
        <strain>DSM 15465 / Z2491</strain>
    </source>
</reference>
<sequence length="299" mass="33276">MWFKQISFYPLNKEKLPEADVLADKLAEAEFTHCQGLDWFSEGFTAPVSFSPELVFPADFTLRVALKKEEKVLPAGVIRDILEEKVAEIQNNEARNVGRKEKQELKEQITDDLLPRAFTRSSRTEAVFNTRHGYLLVNNAASAKAENILTKLREALGGLEASLPNTKQSPSSLMTGWLLQGHCEGGFELDSDCELKGTGDIVPVVKVSKQDLTADEVVQHVKNGKTVTQLGLVWREQIAFILTQDFTLKRIQYLDVLQEEAESNGDDAAGLAFASQILMAESVSIMLEELVSYLGGWQD</sequence>
<gene>
    <name evidence="1" type="primary">rdgC</name>
    <name type="ordered locus">NMA1062</name>
</gene>
<feature type="chain" id="PRO_0000211742" description="Recombination-associated protein RdgC">
    <location>
        <begin position="1"/>
        <end position="299"/>
    </location>
</feature>
<evidence type="ECO:0000255" key="1">
    <source>
        <dbReference type="HAMAP-Rule" id="MF_00194"/>
    </source>
</evidence>
<dbReference type="EMBL" id="AL157959">
    <property type="protein sequence ID" value="CAM08276.1"/>
    <property type="molecule type" value="Genomic_DNA"/>
</dbReference>
<dbReference type="PIR" id="D81871">
    <property type="entry name" value="D81871"/>
</dbReference>
<dbReference type="RefSeq" id="WP_002220640.1">
    <property type="nucleotide sequence ID" value="NC_003116.1"/>
</dbReference>
<dbReference type="SMR" id="Q9JV02"/>
<dbReference type="EnsemblBacteria" id="CAM08276">
    <property type="protein sequence ID" value="CAM08276"/>
    <property type="gene ID" value="NMA1062"/>
</dbReference>
<dbReference type="KEGG" id="nma:NMA1062"/>
<dbReference type="HOGENOM" id="CLU_052038_0_0_4"/>
<dbReference type="Proteomes" id="UP000000626">
    <property type="component" value="Chromosome"/>
</dbReference>
<dbReference type="GO" id="GO:0005737">
    <property type="term" value="C:cytoplasm"/>
    <property type="evidence" value="ECO:0007669"/>
    <property type="project" value="UniProtKB-UniRule"/>
</dbReference>
<dbReference type="GO" id="GO:0009295">
    <property type="term" value="C:nucleoid"/>
    <property type="evidence" value="ECO:0007669"/>
    <property type="project" value="UniProtKB-SubCell"/>
</dbReference>
<dbReference type="GO" id="GO:0006310">
    <property type="term" value="P:DNA recombination"/>
    <property type="evidence" value="ECO:0007669"/>
    <property type="project" value="UniProtKB-UniRule"/>
</dbReference>
<dbReference type="HAMAP" id="MF_00194">
    <property type="entry name" value="RdgC"/>
    <property type="match status" value="1"/>
</dbReference>
<dbReference type="InterPro" id="IPR007476">
    <property type="entry name" value="RdgC"/>
</dbReference>
<dbReference type="NCBIfam" id="NF001464">
    <property type="entry name" value="PRK00321.1-5"/>
    <property type="match status" value="1"/>
</dbReference>
<dbReference type="PANTHER" id="PTHR38103">
    <property type="entry name" value="RECOMBINATION-ASSOCIATED PROTEIN RDGC"/>
    <property type="match status" value="1"/>
</dbReference>
<dbReference type="PANTHER" id="PTHR38103:SF1">
    <property type="entry name" value="RECOMBINATION-ASSOCIATED PROTEIN RDGC"/>
    <property type="match status" value="1"/>
</dbReference>
<dbReference type="Pfam" id="PF04381">
    <property type="entry name" value="RdgC"/>
    <property type="match status" value="1"/>
</dbReference>